<evidence type="ECO:0000255" key="1">
    <source>
        <dbReference type="HAMAP-Rule" id="MF_00564"/>
    </source>
</evidence>
<comment type="function">
    <text evidence="1">Phosphorolytic 3'-5' exoribonuclease that plays an important role in tRNA 3'-end maturation. Removes nucleotide residues following the 3'-CCA terminus of tRNAs; can also add nucleotides to the ends of RNA molecules by using nucleoside diphosphates as substrates, but this may not be physiologically important. Probably plays a role in initiation of 16S rRNA degradation (leading to ribosome degradation) during starvation.</text>
</comment>
<comment type="catalytic activity">
    <reaction evidence="1">
        <text>tRNA(n+1) + phosphate = tRNA(n) + a ribonucleoside 5'-diphosphate</text>
        <dbReference type="Rhea" id="RHEA:10628"/>
        <dbReference type="Rhea" id="RHEA-COMP:17343"/>
        <dbReference type="Rhea" id="RHEA-COMP:17344"/>
        <dbReference type="ChEBI" id="CHEBI:43474"/>
        <dbReference type="ChEBI" id="CHEBI:57930"/>
        <dbReference type="ChEBI" id="CHEBI:173114"/>
        <dbReference type="EC" id="2.7.7.56"/>
    </reaction>
</comment>
<comment type="subunit">
    <text evidence="1">Homohexameric ring arranged as a trimer of dimers.</text>
</comment>
<comment type="similarity">
    <text evidence="1">Belongs to the RNase PH family.</text>
</comment>
<keyword id="KW-0548">Nucleotidyltransferase</keyword>
<keyword id="KW-1185">Reference proteome</keyword>
<keyword id="KW-0694">RNA-binding</keyword>
<keyword id="KW-0698">rRNA processing</keyword>
<keyword id="KW-0808">Transferase</keyword>
<keyword id="KW-0819">tRNA processing</keyword>
<keyword id="KW-0820">tRNA-binding</keyword>
<gene>
    <name evidence="1" type="primary">rph</name>
    <name type="ordered locus">ELI_06010</name>
</gene>
<sequence length="237" mass="25513">MRPSGRAPDEMRAITIETGYTKHAEGSCLIGFGDTKVLCTASVEERLPPWLRGKGQGWVTGEYSMLPRATHTRGNREAARGKQSGRTQEIQRLIGRSLRAVVDLEKLGERQITLDCDVIQADGGTRTASISGAWIALRLAVSGLMEQGQIKDDPITGKIAAISCGIYNGTPVLDLDYAEDSNADADANFVLIEGGKIAEAQATAEGATYDEEGLMRLLRLAQIGCAQIFKSQDEATK</sequence>
<protein>
    <recommendedName>
        <fullName evidence="1">Ribonuclease PH</fullName>
        <shortName evidence="1">RNase PH</shortName>
        <ecNumber evidence="1">2.7.7.56</ecNumber>
    </recommendedName>
    <alternativeName>
        <fullName evidence="1">tRNA nucleotidyltransferase</fullName>
    </alternativeName>
</protein>
<feature type="chain" id="PRO_1000024804" description="Ribonuclease PH">
    <location>
        <begin position="1"/>
        <end position="237"/>
    </location>
</feature>
<feature type="binding site" evidence="1">
    <location>
        <position position="86"/>
    </location>
    <ligand>
        <name>phosphate</name>
        <dbReference type="ChEBI" id="CHEBI:43474"/>
        <note>substrate</note>
    </ligand>
</feature>
<feature type="binding site" evidence="1">
    <location>
        <begin position="124"/>
        <end position="126"/>
    </location>
    <ligand>
        <name>phosphate</name>
        <dbReference type="ChEBI" id="CHEBI:43474"/>
        <note>substrate</note>
    </ligand>
</feature>
<dbReference type="EC" id="2.7.7.56" evidence="1"/>
<dbReference type="EMBL" id="CP000157">
    <property type="protein sequence ID" value="ABC63294.1"/>
    <property type="molecule type" value="Genomic_DNA"/>
</dbReference>
<dbReference type="RefSeq" id="WP_011414130.1">
    <property type="nucleotide sequence ID" value="NC_007722.1"/>
</dbReference>
<dbReference type="SMR" id="Q2NAJ7"/>
<dbReference type="STRING" id="314225.ELI_06010"/>
<dbReference type="KEGG" id="eli:ELI_06010"/>
<dbReference type="eggNOG" id="COG0689">
    <property type="taxonomic scope" value="Bacteria"/>
</dbReference>
<dbReference type="HOGENOM" id="CLU_050858_0_0_5"/>
<dbReference type="OrthoDB" id="9802265at2"/>
<dbReference type="Proteomes" id="UP000008808">
    <property type="component" value="Chromosome"/>
</dbReference>
<dbReference type="GO" id="GO:0000175">
    <property type="term" value="F:3'-5'-RNA exonuclease activity"/>
    <property type="evidence" value="ECO:0007669"/>
    <property type="project" value="UniProtKB-UniRule"/>
</dbReference>
<dbReference type="GO" id="GO:0000049">
    <property type="term" value="F:tRNA binding"/>
    <property type="evidence" value="ECO:0007669"/>
    <property type="project" value="UniProtKB-UniRule"/>
</dbReference>
<dbReference type="GO" id="GO:0009022">
    <property type="term" value="F:tRNA nucleotidyltransferase activity"/>
    <property type="evidence" value="ECO:0007669"/>
    <property type="project" value="UniProtKB-UniRule"/>
</dbReference>
<dbReference type="GO" id="GO:0016075">
    <property type="term" value="P:rRNA catabolic process"/>
    <property type="evidence" value="ECO:0007669"/>
    <property type="project" value="UniProtKB-UniRule"/>
</dbReference>
<dbReference type="GO" id="GO:0006364">
    <property type="term" value="P:rRNA processing"/>
    <property type="evidence" value="ECO:0007669"/>
    <property type="project" value="UniProtKB-KW"/>
</dbReference>
<dbReference type="GO" id="GO:0008033">
    <property type="term" value="P:tRNA processing"/>
    <property type="evidence" value="ECO:0007669"/>
    <property type="project" value="UniProtKB-UniRule"/>
</dbReference>
<dbReference type="CDD" id="cd11362">
    <property type="entry name" value="RNase_PH_bact"/>
    <property type="match status" value="1"/>
</dbReference>
<dbReference type="FunFam" id="3.30.230.70:FF:000003">
    <property type="entry name" value="Ribonuclease PH"/>
    <property type="match status" value="1"/>
</dbReference>
<dbReference type="Gene3D" id="3.30.230.70">
    <property type="entry name" value="GHMP Kinase, N-terminal domain"/>
    <property type="match status" value="1"/>
</dbReference>
<dbReference type="HAMAP" id="MF_00564">
    <property type="entry name" value="RNase_PH"/>
    <property type="match status" value="1"/>
</dbReference>
<dbReference type="InterPro" id="IPR001247">
    <property type="entry name" value="ExoRNase_PH_dom1"/>
</dbReference>
<dbReference type="InterPro" id="IPR015847">
    <property type="entry name" value="ExoRNase_PH_dom2"/>
</dbReference>
<dbReference type="InterPro" id="IPR036345">
    <property type="entry name" value="ExoRNase_PH_dom2_sf"/>
</dbReference>
<dbReference type="InterPro" id="IPR027408">
    <property type="entry name" value="PNPase/RNase_PH_dom_sf"/>
</dbReference>
<dbReference type="InterPro" id="IPR020568">
    <property type="entry name" value="Ribosomal_Su5_D2-typ_SF"/>
</dbReference>
<dbReference type="InterPro" id="IPR050080">
    <property type="entry name" value="RNase_PH"/>
</dbReference>
<dbReference type="InterPro" id="IPR002381">
    <property type="entry name" value="RNase_PH_bac-type"/>
</dbReference>
<dbReference type="InterPro" id="IPR018336">
    <property type="entry name" value="RNase_PH_CS"/>
</dbReference>
<dbReference type="NCBIfam" id="TIGR01966">
    <property type="entry name" value="RNasePH"/>
    <property type="match status" value="1"/>
</dbReference>
<dbReference type="PANTHER" id="PTHR11953">
    <property type="entry name" value="EXOSOME COMPLEX COMPONENT"/>
    <property type="match status" value="1"/>
</dbReference>
<dbReference type="PANTHER" id="PTHR11953:SF0">
    <property type="entry name" value="EXOSOME COMPLEX COMPONENT RRP41"/>
    <property type="match status" value="1"/>
</dbReference>
<dbReference type="Pfam" id="PF01138">
    <property type="entry name" value="RNase_PH"/>
    <property type="match status" value="1"/>
</dbReference>
<dbReference type="Pfam" id="PF03725">
    <property type="entry name" value="RNase_PH_C"/>
    <property type="match status" value="1"/>
</dbReference>
<dbReference type="SUPFAM" id="SSF55666">
    <property type="entry name" value="Ribonuclease PH domain 2-like"/>
    <property type="match status" value="1"/>
</dbReference>
<dbReference type="SUPFAM" id="SSF54211">
    <property type="entry name" value="Ribosomal protein S5 domain 2-like"/>
    <property type="match status" value="1"/>
</dbReference>
<dbReference type="PROSITE" id="PS01277">
    <property type="entry name" value="RIBONUCLEASE_PH"/>
    <property type="match status" value="1"/>
</dbReference>
<reference key="1">
    <citation type="journal article" date="2009" name="J. Bacteriol.">
        <title>Complete genome sequence of Erythrobacter litoralis HTCC2594.</title>
        <authorList>
            <person name="Oh H.M."/>
            <person name="Giovannoni S.J."/>
            <person name="Ferriera S."/>
            <person name="Johnson J."/>
            <person name="Cho J.C."/>
        </authorList>
    </citation>
    <scope>NUCLEOTIDE SEQUENCE [LARGE SCALE GENOMIC DNA]</scope>
    <source>
        <strain>HTCC2594</strain>
    </source>
</reference>
<name>RNPH_ERYLH</name>
<proteinExistence type="inferred from homology"/>
<organism>
    <name type="scientific">Erythrobacter litoralis (strain HTCC2594)</name>
    <dbReference type="NCBI Taxonomy" id="314225"/>
    <lineage>
        <taxon>Bacteria</taxon>
        <taxon>Pseudomonadati</taxon>
        <taxon>Pseudomonadota</taxon>
        <taxon>Alphaproteobacteria</taxon>
        <taxon>Sphingomonadales</taxon>
        <taxon>Erythrobacteraceae</taxon>
        <taxon>Erythrobacter/Porphyrobacter group</taxon>
        <taxon>Erythrobacter</taxon>
    </lineage>
</organism>
<accession>Q2NAJ7</accession>